<gene>
    <name evidence="1" type="primary">coq3</name>
    <name type="ORF">SPCC162.05</name>
</gene>
<organism>
    <name type="scientific">Schizosaccharomyces pombe (strain 972 / ATCC 24843)</name>
    <name type="common">Fission yeast</name>
    <dbReference type="NCBI Taxonomy" id="284812"/>
    <lineage>
        <taxon>Eukaryota</taxon>
        <taxon>Fungi</taxon>
        <taxon>Dikarya</taxon>
        <taxon>Ascomycota</taxon>
        <taxon>Taphrinomycotina</taxon>
        <taxon>Schizosaccharomycetes</taxon>
        <taxon>Schizosaccharomycetales</taxon>
        <taxon>Schizosaccharomycetaceae</taxon>
        <taxon>Schizosaccharomyces</taxon>
    </lineage>
</organism>
<proteinExistence type="inferred from homology"/>
<feature type="transit peptide" description="Mitochondrion" evidence="1">
    <location>
        <begin position="1"/>
        <end position="30"/>
    </location>
</feature>
<feature type="chain" id="PRO_0000035931" description="Ubiquinone biosynthesis O-methyltransferase, mitochondrial">
    <location>
        <begin position="31"/>
        <end position="274"/>
    </location>
</feature>
<feature type="binding site" evidence="1">
    <location>
        <position position="65"/>
    </location>
    <ligand>
        <name>S-adenosyl-L-methionine</name>
        <dbReference type="ChEBI" id="CHEBI:59789"/>
    </ligand>
</feature>
<feature type="binding site" evidence="1">
    <location>
        <position position="88"/>
    </location>
    <ligand>
        <name>S-adenosyl-L-methionine</name>
        <dbReference type="ChEBI" id="CHEBI:59789"/>
    </ligand>
</feature>
<feature type="binding site" evidence="1">
    <location>
        <position position="109"/>
    </location>
    <ligand>
        <name>S-adenosyl-L-methionine</name>
        <dbReference type="ChEBI" id="CHEBI:59789"/>
    </ligand>
</feature>
<feature type="binding site" evidence="1">
    <location>
        <position position="154"/>
    </location>
    <ligand>
        <name>S-adenosyl-L-methionine</name>
        <dbReference type="ChEBI" id="CHEBI:59789"/>
    </ligand>
</feature>
<feature type="binding site" evidence="1">
    <location>
        <position position="155"/>
    </location>
    <ligand>
        <name>Mg(2+)</name>
        <dbReference type="ChEBI" id="CHEBI:18420"/>
    </ligand>
</feature>
<feature type="binding site" evidence="1">
    <location>
        <position position="158"/>
    </location>
    <ligand>
        <name>Mg(2+)</name>
        <dbReference type="ChEBI" id="CHEBI:18420"/>
    </ligand>
</feature>
<feature type="binding site" evidence="1">
    <location>
        <position position="159"/>
    </location>
    <ligand>
        <name>Mg(2+)</name>
        <dbReference type="ChEBI" id="CHEBI:18420"/>
    </ligand>
</feature>
<keyword id="KW-0460">Magnesium</keyword>
<keyword id="KW-0472">Membrane</keyword>
<keyword id="KW-0479">Metal-binding</keyword>
<keyword id="KW-0489">Methyltransferase</keyword>
<keyword id="KW-0496">Mitochondrion</keyword>
<keyword id="KW-0999">Mitochondrion inner membrane</keyword>
<keyword id="KW-1185">Reference proteome</keyword>
<keyword id="KW-0949">S-adenosyl-L-methionine</keyword>
<keyword id="KW-0808">Transferase</keyword>
<keyword id="KW-0809">Transit peptide</keyword>
<keyword id="KW-0831">Ubiquinone biosynthesis</keyword>
<reference key="1">
    <citation type="journal article" date="2002" name="Nature">
        <title>The genome sequence of Schizosaccharomyces pombe.</title>
        <authorList>
            <person name="Wood V."/>
            <person name="Gwilliam R."/>
            <person name="Rajandream M.A."/>
            <person name="Lyne M.H."/>
            <person name="Lyne R."/>
            <person name="Stewart A."/>
            <person name="Sgouros J.G."/>
            <person name="Peat N."/>
            <person name="Hayles J."/>
            <person name="Baker S.G."/>
            <person name="Basham D."/>
            <person name="Bowman S."/>
            <person name="Brooks K."/>
            <person name="Brown D."/>
            <person name="Brown S."/>
            <person name="Chillingworth T."/>
            <person name="Churcher C.M."/>
            <person name="Collins M."/>
            <person name="Connor R."/>
            <person name="Cronin A."/>
            <person name="Davis P."/>
            <person name="Feltwell T."/>
            <person name="Fraser A."/>
            <person name="Gentles S."/>
            <person name="Goble A."/>
            <person name="Hamlin N."/>
            <person name="Harris D.E."/>
            <person name="Hidalgo J."/>
            <person name="Hodgson G."/>
            <person name="Holroyd S."/>
            <person name="Hornsby T."/>
            <person name="Howarth S."/>
            <person name="Huckle E.J."/>
            <person name="Hunt S."/>
            <person name="Jagels K."/>
            <person name="James K.D."/>
            <person name="Jones L."/>
            <person name="Jones M."/>
            <person name="Leather S."/>
            <person name="McDonald S."/>
            <person name="McLean J."/>
            <person name="Mooney P."/>
            <person name="Moule S."/>
            <person name="Mungall K.L."/>
            <person name="Murphy L.D."/>
            <person name="Niblett D."/>
            <person name="Odell C."/>
            <person name="Oliver K."/>
            <person name="O'Neil S."/>
            <person name="Pearson D."/>
            <person name="Quail M.A."/>
            <person name="Rabbinowitsch E."/>
            <person name="Rutherford K.M."/>
            <person name="Rutter S."/>
            <person name="Saunders D."/>
            <person name="Seeger K."/>
            <person name="Sharp S."/>
            <person name="Skelton J."/>
            <person name="Simmonds M.N."/>
            <person name="Squares R."/>
            <person name="Squares S."/>
            <person name="Stevens K."/>
            <person name="Taylor K."/>
            <person name="Taylor R.G."/>
            <person name="Tivey A."/>
            <person name="Walsh S.V."/>
            <person name="Warren T."/>
            <person name="Whitehead S."/>
            <person name="Woodward J.R."/>
            <person name="Volckaert G."/>
            <person name="Aert R."/>
            <person name="Robben J."/>
            <person name="Grymonprez B."/>
            <person name="Weltjens I."/>
            <person name="Vanstreels E."/>
            <person name="Rieger M."/>
            <person name="Schaefer M."/>
            <person name="Mueller-Auer S."/>
            <person name="Gabel C."/>
            <person name="Fuchs M."/>
            <person name="Duesterhoeft A."/>
            <person name="Fritzc C."/>
            <person name="Holzer E."/>
            <person name="Moestl D."/>
            <person name="Hilbert H."/>
            <person name="Borzym K."/>
            <person name="Langer I."/>
            <person name="Beck A."/>
            <person name="Lehrach H."/>
            <person name="Reinhardt R."/>
            <person name="Pohl T.M."/>
            <person name="Eger P."/>
            <person name="Zimmermann W."/>
            <person name="Wedler H."/>
            <person name="Wambutt R."/>
            <person name="Purnelle B."/>
            <person name="Goffeau A."/>
            <person name="Cadieu E."/>
            <person name="Dreano S."/>
            <person name="Gloux S."/>
            <person name="Lelaure V."/>
            <person name="Mottier S."/>
            <person name="Galibert F."/>
            <person name="Aves S.J."/>
            <person name="Xiang Z."/>
            <person name="Hunt C."/>
            <person name="Moore K."/>
            <person name="Hurst S.M."/>
            <person name="Lucas M."/>
            <person name="Rochet M."/>
            <person name="Gaillardin C."/>
            <person name="Tallada V.A."/>
            <person name="Garzon A."/>
            <person name="Thode G."/>
            <person name="Daga R.R."/>
            <person name="Cruzado L."/>
            <person name="Jimenez J."/>
            <person name="Sanchez M."/>
            <person name="del Rey F."/>
            <person name="Benito J."/>
            <person name="Dominguez A."/>
            <person name="Revuelta J.L."/>
            <person name="Moreno S."/>
            <person name="Armstrong J."/>
            <person name="Forsburg S.L."/>
            <person name="Cerutti L."/>
            <person name="Lowe T."/>
            <person name="McCombie W.R."/>
            <person name="Paulsen I."/>
            <person name="Potashkin J."/>
            <person name="Shpakovski G.V."/>
            <person name="Ussery D."/>
            <person name="Barrell B.G."/>
            <person name="Nurse P."/>
        </authorList>
    </citation>
    <scope>NUCLEOTIDE SEQUENCE [LARGE SCALE GENOMIC DNA]</scope>
    <source>
        <strain>972 / ATCC 24843</strain>
    </source>
</reference>
<reference key="2">
    <citation type="journal article" date="2011" name="Science">
        <title>Comparative functional genomics of the fission yeasts.</title>
        <authorList>
            <person name="Rhind N."/>
            <person name="Chen Z."/>
            <person name="Yassour M."/>
            <person name="Thompson D.A."/>
            <person name="Haas B.J."/>
            <person name="Habib N."/>
            <person name="Wapinski I."/>
            <person name="Roy S."/>
            <person name="Lin M.F."/>
            <person name="Heiman D.I."/>
            <person name="Young S.K."/>
            <person name="Furuya K."/>
            <person name="Guo Y."/>
            <person name="Pidoux A."/>
            <person name="Chen H.M."/>
            <person name="Robbertse B."/>
            <person name="Goldberg J.M."/>
            <person name="Aoki K."/>
            <person name="Bayne E.H."/>
            <person name="Berlin A.M."/>
            <person name="Desjardins C.A."/>
            <person name="Dobbs E."/>
            <person name="Dukaj L."/>
            <person name="Fan L."/>
            <person name="FitzGerald M.G."/>
            <person name="French C."/>
            <person name="Gujja S."/>
            <person name="Hansen K."/>
            <person name="Keifenheim D."/>
            <person name="Levin J.Z."/>
            <person name="Mosher R.A."/>
            <person name="Mueller C.A."/>
            <person name="Pfiffner J."/>
            <person name="Priest M."/>
            <person name="Russ C."/>
            <person name="Smialowska A."/>
            <person name="Swoboda P."/>
            <person name="Sykes S.M."/>
            <person name="Vaughn M."/>
            <person name="Vengrova S."/>
            <person name="Yoder R."/>
            <person name="Zeng Q."/>
            <person name="Allshire R."/>
            <person name="Baulcombe D."/>
            <person name="Birren B.W."/>
            <person name="Brown W."/>
            <person name="Ekwall K."/>
            <person name="Kellis M."/>
            <person name="Leatherwood J."/>
            <person name="Levin H."/>
            <person name="Margalit H."/>
            <person name="Martienssen R."/>
            <person name="Nieduszynski C.A."/>
            <person name="Spatafora J.W."/>
            <person name="Friedman N."/>
            <person name="Dalgaard J.Z."/>
            <person name="Baumann P."/>
            <person name="Niki H."/>
            <person name="Regev A."/>
            <person name="Nusbaum C."/>
        </authorList>
    </citation>
    <scope>REVISION OF GENE MODEL</scope>
</reference>
<reference key="3">
    <citation type="journal article" date="2006" name="Nat. Biotechnol.">
        <title>ORFeome cloning and global analysis of protein localization in the fission yeast Schizosaccharomyces pombe.</title>
        <authorList>
            <person name="Matsuyama A."/>
            <person name="Arai R."/>
            <person name="Yashiroda Y."/>
            <person name="Shirai A."/>
            <person name="Kamata A."/>
            <person name="Sekido S."/>
            <person name="Kobayashi Y."/>
            <person name="Hashimoto A."/>
            <person name="Hamamoto M."/>
            <person name="Hiraoka Y."/>
            <person name="Horinouchi S."/>
            <person name="Yoshida M."/>
        </authorList>
    </citation>
    <scope>SUBCELLULAR LOCATION [LARGE SCALE ANALYSIS]</scope>
</reference>
<reference key="4">
    <citation type="journal article" date="2008" name="FEBS J.">
        <title>Comparison of a coq7 deletion mutant with other respiration-defective mutants in fission yeast.</title>
        <authorList>
            <person name="Miki R."/>
            <person name="Saiki R."/>
            <person name="Ozoe Y."/>
            <person name="Kawamukai M."/>
        </authorList>
    </citation>
    <scope>DISRUPTION PHENOTYPE</scope>
</reference>
<reference key="5">
    <citation type="journal article" date="2014" name="PLoS ONE">
        <title>Functional conservation of coenzyme Q biosynthetic genes among yeasts, plants, and humans.</title>
        <authorList>
            <person name="Hayashi K."/>
            <person name="Ogiyama Y."/>
            <person name="Yokomi K."/>
            <person name="Nakagawa T."/>
            <person name="Kaino T."/>
            <person name="Kawamukai M."/>
        </authorList>
    </citation>
    <scope>SUBCELLULAR LOCATION</scope>
    <scope>PATHWAY</scope>
</reference>
<name>COQ3_SCHPO</name>
<sequence length="274" mass="30827">MNSMNILNKVKNVKSYTRLVRQGFLSQQRNHSVSVNEVDHFNELAKTWWDWDGGSRLLHLMNSTRLDFMTEVFRERNCFSGKKILDIGCGGGILSESMARLGASVTAVDASPMAIEVAKKHASLDPVLNGRLEYIHGSVEGSQLPTTFDVVTCMEVLEHVEQPRDFLFSLMEKVKPNGRLVLSTISRTLLARLLTITLAEHVLRIVPVGTHTFEKFIRADELSNFLKEQNWIINDIRGVCYNPLKQQWTLDKPGSSGLGLSCNYFLSAQKPMSA</sequence>
<protein>
    <recommendedName>
        <fullName evidence="1">Ubiquinone biosynthesis O-methyltransferase, mitochondrial</fullName>
    </recommendedName>
    <alternativeName>
        <fullName evidence="1">3-demethylubiquinol 3-O-methyltransferase</fullName>
        <ecNumber evidence="1">2.1.1.64</ecNumber>
    </alternativeName>
    <alternativeName>
        <fullName evidence="1">3-demethylubiquinone 3-O-methyltransferase</fullName>
        <ecNumber evidence="1">2.1.1.-</ecNumber>
    </alternativeName>
    <alternativeName>
        <fullName evidence="1">Polyprenyldihydroxybenzoate methyltransferase</fullName>
        <ecNumber evidence="1">2.1.1.114</ecNumber>
    </alternativeName>
</protein>
<comment type="function">
    <text evidence="1">O-methyltransferase required for two non-consecutive steps during ubiquinone biosynthesis. Catalyzes the 2 O-methylation of 3,4-dihydroxy-5-(all-trans-decaprenyl)benzoic acid into 4-hydroxy-3-methoxy-5-(all-trans-decaprenyl)benzoic acid. Also catalyzes the last step of ubiquinone biosynthesis by mediating methylation of 3-demethylubiquinone into ubiquinone. Also able to mediate the methylation of 3-demethylubiquinol-10 into ubiquinol-10.</text>
</comment>
<comment type="catalytic activity">
    <reaction evidence="1">
        <text>3,4-dihydroxy-5-(all-trans-decaprenyl)benzoate + S-adenosyl-L-methionine = 4-hydroxy-3-methoxy-5-(all-trans-decaprenyl)benzoate + S-adenosyl-L-homocysteine + H(+)</text>
        <dbReference type="Rhea" id="RHEA:44492"/>
        <dbReference type="ChEBI" id="CHEBI:15378"/>
        <dbReference type="ChEBI" id="CHEBI:57856"/>
        <dbReference type="ChEBI" id="CHEBI:59789"/>
        <dbReference type="ChEBI" id="CHEBI:62793"/>
        <dbReference type="ChEBI" id="CHEBI:62796"/>
        <dbReference type="EC" id="2.1.1.114"/>
    </reaction>
</comment>
<comment type="catalytic activity">
    <reaction evidence="1">
        <text>a 3-demethylubiquinone + S-adenosyl-L-methionine = a ubiquinone + S-adenosyl-L-homocysteine</text>
        <dbReference type="Rhea" id="RHEA:81215"/>
        <dbReference type="Rhea" id="RHEA-COMP:9565"/>
        <dbReference type="Rhea" id="RHEA-COMP:19654"/>
        <dbReference type="ChEBI" id="CHEBI:16389"/>
        <dbReference type="ChEBI" id="CHEBI:57856"/>
        <dbReference type="ChEBI" id="CHEBI:59789"/>
        <dbReference type="ChEBI" id="CHEBI:231825"/>
    </reaction>
</comment>
<comment type="catalytic activity">
    <reaction evidence="1">
        <text>3-demethylubiquinol-10 + S-adenosyl-L-methionine = ubiquinol-10 + S-adenosyl-L-homocysteine + H(+)</text>
        <dbReference type="Rhea" id="RHEA:44412"/>
        <dbReference type="ChEBI" id="CHEBI:15378"/>
        <dbReference type="ChEBI" id="CHEBI:57856"/>
        <dbReference type="ChEBI" id="CHEBI:59789"/>
        <dbReference type="ChEBI" id="CHEBI:64182"/>
        <dbReference type="ChEBI" id="CHEBI:64183"/>
        <dbReference type="EC" id="2.1.1.64"/>
    </reaction>
</comment>
<comment type="cofactor">
    <cofactor evidence="1">
        <name>Mg(2+)</name>
        <dbReference type="ChEBI" id="CHEBI:18420"/>
    </cofactor>
</comment>
<comment type="pathway">
    <text evidence="1 4">Cofactor biosynthesis; ubiquinone biosynthesis.</text>
</comment>
<comment type="subunit">
    <text evidence="1">Component of a multi-subunit COQ enzyme complex, composed of at least coq3, coq4, coq5, coq6, coq7 and coq9.</text>
</comment>
<comment type="subcellular location">
    <subcellularLocation>
        <location evidence="1 4">Mitochondrion inner membrane</location>
        <topology evidence="1">Peripheral membrane protein</topology>
        <orientation evidence="1 2">Matrix side</orientation>
    </subcellularLocation>
</comment>
<comment type="disruption phenotype">
    <text evidence="3">Leads to respiration deficiency.</text>
</comment>
<comment type="similarity">
    <text evidence="1">Belongs to the class I-like SAM-binding methyltransferase superfamily. UbiG/COQ3 family.</text>
</comment>
<evidence type="ECO:0000255" key="1">
    <source>
        <dbReference type="HAMAP-Rule" id="MF_03190"/>
    </source>
</evidence>
<evidence type="ECO:0000269" key="2">
    <source>
    </source>
</evidence>
<evidence type="ECO:0000269" key="3">
    <source>
    </source>
</evidence>
<evidence type="ECO:0000269" key="4">
    <source>
    </source>
</evidence>
<accession>O74421</accession>
<dbReference type="EC" id="2.1.1.64" evidence="1"/>
<dbReference type="EC" id="2.1.1.-" evidence="1"/>
<dbReference type="EC" id="2.1.1.114" evidence="1"/>
<dbReference type="EMBL" id="CU329672">
    <property type="protein sequence ID" value="CAA19585.2"/>
    <property type="molecule type" value="Genomic_DNA"/>
</dbReference>
<dbReference type="PIR" id="T41026">
    <property type="entry name" value="T41026"/>
</dbReference>
<dbReference type="RefSeq" id="NP_588239.2">
    <property type="nucleotide sequence ID" value="NM_001023229.2"/>
</dbReference>
<dbReference type="SMR" id="O74421"/>
<dbReference type="BioGRID" id="275354">
    <property type="interactions" value="2"/>
</dbReference>
<dbReference type="FunCoup" id="O74421">
    <property type="interactions" value="353"/>
</dbReference>
<dbReference type="STRING" id="284812.O74421"/>
<dbReference type="SwissPalm" id="O74421"/>
<dbReference type="PaxDb" id="4896-SPCC162.05.1"/>
<dbReference type="EnsemblFungi" id="SPCC162.05.1">
    <property type="protein sequence ID" value="SPCC162.05.1:pep"/>
    <property type="gene ID" value="SPCC162.05"/>
</dbReference>
<dbReference type="GeneID" id="2538771"/>
<dbReference type="KEGG" id="spo:2538771"/>
<dbReference type="PomBase" id="SPCC162.05">
    <property type="gene designation" value="coq3"/>
</dbReference>
<dbReference type="VEuPathDB" id="FungiDB:SPCC162.05"/>
<dbReference type="eggNOG" id="KOG1270">
    <property type="taxonomic scope" value="Eukaryota"/>
</dbReference>
<dbReference type="HOGENOM" id="CLU_042432_3_1_1"/>
<dbReference type="InParanoid" id="O74421"/>
<dbReference type="OMA" id="LASRWWD"/>
<dbReference type="Reactome" id="R-SPO-2142789">
    <property type="pathway name" value="Ubiquinol biosynthesis"/>
</dbReference>
<dbReference type="UniPathway" id="UPA00232"/>
<dbReference type="PRO" id="PR:O74421"/>
<dbReference type="Proteomes" id="UP000002485">
    <property type="component" value="Chromosome III"/>
</dbReference>
<dbReference type="GO" id="GO:0031314">
    <property type="term" value="C:extrinsic component of mitochondrial inner membrane"/>
    <property type="evidence" value="ECO:0007669"/>
    <property type="project" value="UniProtKB-UniRule"/>
</dbReference>
<dbReference type="GO" id="GO:0005739">
    <property type="term" value="C:mitochondrion"/>
    <property type="evidence" value="ECO:0000314"/>
    <property type="project" value="PomBase"/>
</dbReference>
<dbReference type="GO" id="GO:0061542">
    <property type="term" value="F:3-demethylubiquinol 3-O-methyltransferase activity"/>
    <property type="evidence" value="ECO:0007669"/>
    <property type="project" value="UniProtKB-UniRule"/>
</dbReference>
<dbReference type="GO" id="GO:0120537">
    <property type="term" value="F:3-demethylubiquinone 3-O-methyltransferase activity"/>
    <property type="evidence" value="ECO:0007669"/>
    <property type="project" value="RHEA"/>
</dbReference>
<dbReference type="GO" id="GO:0010420">
    <property type="term" value="F:polyprenyldihydroxybenzoate methyltransferase activity"/>
    <property type="evidence" value="ECO:0000318"/>
    <property type="project" value="GO_Central"/>
</dbReference>
<dbReference type="GO" id="GO:0032259">
    <property type="term" value="P:methylation"/>
    <property type="evidence" value="ECO:0007669"/>
    <property type="project" value="UniProtKB-KW"/>
</dbReference>
<dbReference type="GO" id="GO:0006744">
    <property type="term" value="P:ubiquinone biosynthetic process"/>
    <property type="evidence" value="ECO:0000315"/>
    <property type="project" value="PomBase"/>
</dbReference>
<dbReference type="CDD" id="cd02440">
    <property type="entry name" value="AdoMet_MTases"/>
    <property type="match status" value="1"/>
</dbReference>
<dbReference type="Gene3D" id="3.40.50.150">
    <property type="entry name" value="Vaccinia Virus protein VP39"/>
    <property type="match status" value="1"/>
</dbReference>
<dbReference type="HAMAP" id="MF_00472">
    <property type="entry name" value="UbiG"/>
    <property type="match status" value="1"/>
</dbReference>
<dbReference type="InterPro" id="IPR029063">
    <property type="entry name" value="SAM-dependent_MTases_sf"/>
</dbReference>
<dbReference type="InterPro" id="IPR010233">
    <property type="entry name" value="UbiG_MeTrfase"/>
</dbReference>
<dbReference type="NCBIfam" id="TIGR01983">
    <property type="entry name" value="UbiG"/>
    <property type="match status" value="1"/>
</dbReference>
<dbReference type="PANTHER" id="PTHR43464">
    <property type="entry name" value="METHYLTRANSFERASE"/>
    <property type="match status" value="1"/>
</dbReference>
<dbReference type="PANTHER" id="PTHR43464:SF19">
    <property type="entry name" value="UBIQUINONE BIOSYNTHESIS O-METHYLTRANSFERASE, MITOCHONDRIAL"/>
    <property type="match status" value="1"/>
</dbReference>
<dbReference type="Pfam" id="PF13489">
    <property type="entry name" value="Methyltransf_23"/>
    <property type="match status" value="1"/>
</dbReference>
<dbReference type="SUPFAM" id="SSF53335">
    <property type="entry name" value="S-adenosyl-L-methionine-dependent methyltransferases"/>
    <property type="match status" value="1"/>
</dbReference>